<feature type="signal peptide" evidence="2">
    <location>
        <begin position="1"/>
        <end position="24"/>
    </location>
</feature>
<feature type="chain" id="PRO_5014310291" description="Endo-1,4-beta-xylanase 4">
    <location>
        <begin position="25"/>
        <end position="570"/>
    </location>
</feature>
<feature type="domain" description="GH10" evidence="4">
    <location>
        <begin position="195"/>
        <end position="494"/>
    </location>
</feature>
<feature type="active site" description="Proton donor" evidence="4">
    <location>
        <position position="325"/>
    </location>
</feature>
<feature type="active site" description="Nucleophile" evidence="4">
    <location>
        <position position="432"/>
    </location>
</feature>
<feature type="glycosylation site" description="N-linked (GlcNAc...) asparagine" evidence="3">
    <location>
        <position position="92"/>
    </location>
</feature>
<feature type="glycosylation site" description="N-linked (GlcNAc...) asparagine" evidence="3">
    <location>
        <position position="190"/>
    </location>
</feature>
<feature type="glycosylation site" description="N-linked (GlcNAc...) asparagine" evidence="3">
    <location>
        <position position="300"/>
    </location>
</feature>
<feature type="glycosylation site" description="N-linked (GlcNAc...) asparagine" evidence="3">
    <location>
        <position position="339"/>
    </location>
</feature>
<feature type="glycosylation site" description="N-linked (GlcNAc...) asparagine" evidence="3">
    <location>
        <position position="545"/>
    </location>
</feature>
<name>XYN4_ARATH</name>
<reference key="1">
    <citation type="journal article" date="1999" name="Nature">
        <title>Sequence and analysis of chromosome 2 of the plant Arabidopsis thaliana.</title>
        <authorList>
            <person name="Lin X."/>
            <person name="Kaul S."/>
            <person name="Rounsley S.D."/>
            <person name="Shea T.P."/>
            <person name="Benito M.-I."/>
            <person name="Town C.D."/>
            <person name="Fujii C.Y."/>
            <person name="Mason T.M."/>
            <person name="Bowman C.L."/>
            <person name="Barnstead M.E."/>
            <person name="Feldblyum T.V."/>
            <person name="Buell C.R."/>
            <person name="Ketchum K.A."/>
            <person name="Lee J.J."/>
            <person name="Ronning C.M."/>
            <person name="Koo H.L."/>
            <person name="Moffat K.S."/>
            <person name="Cronin L.A."/>
            <person name="Shen M."/>
            <person name="Pai G."/>
            <person name="Van Aken S."/>
            <person name="Umayam L."/>
            <person name="Tallon L.J."/>
            <person name="Gill J.E."/>
            <person name="Adams M.D."/>
            <person name="Carrera A.J."/>
            <person name="Creasy T.H."/>
            <person name="Goodman H.M."/>
            <person name="Somerville C.R."/>
            <person name="Copenhaver G.P."/>
            <person name="Preuss D."/>
            <person name="Nierman W.C."/>
            <person name="White O."/>
            <person name="Eisen J.A."/>
            <person name="Salzberg S.L."/>
            <person name="Fraser C.M."/>
            <person name="Venter J.C."/>
        </authorList>
    </citation>
    <scope>NUCLEOTIDE SEQUENCE [LARGE SCALE GENOMIC DNA]</scope>
    <source>
        <strain>cv. Columbia</strain>
    </source>
</reference>
<reference key="2">
    <citation type="journal article" date="2017" name="Plant J.">
        <title>Araport11: a complete reannotation of the Arabidopsis thaliana reference genome.</title>
        <authorList>
            <person name="Cheng C.Y."/>
            <person name="Krishnakumar V."/>
            <person name="Chan A.P."/>
            <person name="Thibaud-Nissen F."/>
            <person name="Schobel S."/>
            <person name="Town C.D."/>
        </authorList>
    </citation>
    <scope>GENOME REANNOTATION</scope>
    <source>
        <strain>cv. Columbia</strain>
    </source>
</reference>
<reference key="3">
    <citation type="journal article" date="2003" name="Science">
        <title>Empirical analysis of transcriptional activity in the Arabidopsis genome.</title>
        <authorList>
            <person name="Yamada K."/>
            <person name="Lim J."/>
            <person name="Dale J.M."/>
            <person name="Chen H."/>
            <person name="Shinn P."/>
            <person name="Palm C.J."/>
            <person name="Southwick A.M."/>
            <person name="Wu H.C."/>
            <person name="Kim C.J."/>
            <person name="Nguyen M."/>
            <person name="Pham P.K."/>
            <person name="Cheuk R.F."/>
            <person name="Karlin-Newmann G."/>
            <person name="Liu S.X."/>
            <person name="Lam B."/>
            <person name="Sakano H."/>
            <person name="Wu T."/>
            <person name="Yu G."/>
            <person name="Miranda M."/>
            <person name="Quach H.L."/>
            <person name="Tripp M."/>
            <person name="Chang C.H."/>
            <person name="Lee J.M."/>
            <person name="Toriumi M.J."/>
            <person name="Chan M.M."/>
            <person name="Tang C.C."/>
            <person name="Onodera C.S."/>
            <person name="Deng J.M."/>
            <person name="Akiyama K."/>
            <person name="Ansari Y."/>
            <person name="Arakawa T."/>
            <person name="Banh J."/>
            <person name="Banno F."/>
            <person name="Bowser L."/>
            <person name="Brooks S.Y."/>
            <person name="Carninci P."/>
            <person name="Chao Q."/>
            <person name="Choy N."/>
            <person name="Enju A."/>
            <person name="Goldsmith A.D."/>
            <person name="Gurjal M."/>
            <person name="Hansen N.F."/>
            <person name="Hayashizaki Y."/>
            <person name="Johnson-Hopson C."/>
            <person name="Hsuan V.W."/>
            <person name="Iida K."/>
            <person name="Karnes M."/>
            <person name="Khan S."/>
            <person name="Koesema E."/>
            <person name="Ishida J."/>
            <person name="Jiang P.X."/>
            <person name="Jones T."/>
            <person name="Kawai J."/>
            <person name="Kamiya A."/>
            <person name="Meyers C."/>
            <person name="Nakajima M."/>
            <person name="Narusaka M."/>
            <person name="Seki M."/>
            <person name="Sakurai T."/>
            <person name="Satou M."/>
            <person name="Tamse R."/>
            <person name="Vaysberg M."/>
            <person name="Wallender E.K."/>
            <person name="Wong C."/>
            <person name="Yamamura Y."/>
            <person name="Yuan S."/>
            <person name="Shinozaki K."/>
            <person name="Davis R.W."/>
            <person name="Theologis A."/>
            <person name="Ecker J.R."/>
        </authorList>
    </citation>
    <scope>NUCLEOTIDE SEQUENCE [LARGE SCALE MRNA] OF 42-570</scope>
    <source>
        <strain>cv. Columbia</strain>
    </source>
</reference>
<reference key="4">
    <citation type="submission" date="2004-09" db="EMBL/GenBank/DDBJ databases">
        <title>Large-scale analysis of RIKEN Arabidopsis full-length (RAFL) cDNAs.</title>
        <authorList>
            <person name="Totoki Y."/>
            <person name="Seki M."/>
            <person name="Ishida J."/>
            <person name="Nakajima M."/>
            <person name="Enju A."/>
            <person name="Kamiya A."/>
            <person name="Narusaka M."/>
            <person name="Shin-i T."/>
            <person name="Nakagawa M."/>
            <person name="Sakamoto N."/>
            <person name="Oishi K."/>
            <person name="Kohara Y."/>
            <person name="Kobayashi M."/>
            <person name="Toyoda A."/>
            <person name="Sakaki Y."/>
            <person name="Sakurai T."/>
            <person name="Iida K."/>
            <person name="Akiyama K."/>
            <person name="Satou M."/>
            <person name="Toyoda T."/>
            <person name="Konagaya A."/>
            <person name="Carninci P."/>
            <person name="Kawai J."/>
            <person name="Hayashizaki Y."/>
            <person name="Shinozaki K."/>
        </authorList>
    </citation>
    <scope>NUCLEOTIDE SEQUENCE [LARGE SCALE MRNA]</scope>
    <source>
        <strain>cv. Columbia</strain>
    </source>
</reference>
<reference key="5">
    <citation type="journal article" date="2002" name="Plant Cell Physiol.">
        <title>A xylanase, AtXyn1, is predominantly expressed in vascular bundles, and four putative xylanase genes were identified in the Arabidopsis thaliana genome.</title>
        <authorList>
            <person name="Suzuki M."/>
            <person name="Kato A."/>
            <person name="Nagata N."/>
            <person name="Komeda Y."/>
        </authorList>
    </citation>
    <scope>GENE FAMILY</scope>
    <source>
        <strain>cv. Columbia</strain>
    </source>
</reference>
<dbReference type="EC" id="3.2.1.8" evidence="4"/>
<dbReference type="EMBL" id="AC005398">
    <property type="protein sequence ID" value="AAC69373.1"/>
    <property type="status" value="ALT_SEQ"/>
    <property type="molecule type" value="Genomic_DNA"/>
</dbReference>
<dbReference type="EMBL" id="CP002685">
    <property type="protein sequence ID" value="AEC06322.1"/>
    <property type="molecule type" value="Genomic_DNA"/>
</dbReference>
<dbReference type="EMBL" id="BT010567">
    <property type="protein sequence ID" value="AAQ65190.1"/>
    <property type="molecule type" value="mRNA"/>
</dbReference>
<dbReference type="EMBL" id="AK175950">
    <property type="protein sequence ID" value="BAD43713.1"/>
    <property type="molecule type" value="mRNA"/>
</dbReference>
<dbReference type="PIR" id="C84520">
    <property type="entry name" value="C84520"/>
</dbReference>
<dbReference type="RefSeq" id="NP_179076.3">
    <property type="nucleotide sequence ID" value="NM_127033.4"/>
</dbReference>
<dbReference type="SMR" id="Q680B7"/>
<dbReference type="FunCoup" id="Q680B7">
    <property type="interactions" value="5"/>
</dbReference>
<dbReference type="STRING" id="3702.Q680B7"/>
<dbReference type="CAZy" id="CBM22">
    <property type="family name" value="Carbohydrate-Binding Module Family 22"/>
</dbReference>
<dbReference type="CAZy" id="GH10">
    <property type="family name" value="Glycoside Hydrolase Family 10"/>
</dbReference>
<dbReference type="GlyCosmos" id="Q680B7">
    <property type="glycosylation" value="5 sites, No reported glycans"/>
</dbReference>
<dbReference type="GlyGen" id="Q680B7">
    <property type="glycosylation" value="6 sites"/>
</dbReference>
<dbReference type="iPTMnet" id="Q680B7"/>
<dbReference type="PaxDb" id="3702-AT2G14690.1"/>
<dbReference type="ProteomicsDB" id="242697"/>
<dbReference type="EnsemblPlants" id="AT2G14690.1">
    <property type="protein sequence ID" value="AT2G14690.1"/>
    <property type="gene ID" value="AT2G14690"/>
</dbReference>
<dbReference type="GeneID" id="815957"/>
<dbReference type="Gramene" id="AT2G14690.1">
    <property type="protein sequence ID" value="AT2G14690.1"/>
    <property type="gene ID" value="AT2G14690"/>
</dbReference>
<dbReference type="KEGG" id="ath:AT2G14690"/>
<dbReference type="Araport" id="AT2G14690"/>
<dbReference type="TAIR" id="AT2G14690"/>
<dbReference type="eggNOG" id="ENOG502RD7C">
    <property type="taxonomic scope" value="Eukaryota"/>
</dbReference>
<dbReference type="HOGENOM" id="CLU_008797_4_0_1"/>
<dbReference type="InParanoid" id="Q680B7"/>
<dbReference type="OMA" id="QWRLQQD"/>
<dbReference type="PhylomeDB" id="Q680B7"/>
<dbReference type="BioCyc" id="ARA:AT2G14690-MONOMER"/>
<dbReference type="UniPathway" id="UPA00114"/>
<dbReference type="PRO" id="PR:Q680B7"/>
<dbReference type="Proteomes" id="UP000006548">
    <property type="component" value="Chromosome 2"/>
</dbReference>
<dbReference type="ExpressionAtlas" id="Q680B7">
    <property type="expression patterns" value="baseline and differential"/>
</dbReference>
<dbReference type="GO" id="GO:0031176">
    <property type="term" value="F:endo-1,4-beta-xylanase activity"/>
    <property type="evidence" value="ECO:0000250"/>
    <property type="project" value="TAIR"/>
</dbReference>
<dbReference type="GO" id="GO:0045493">
    <property type="term" value="P:xylan catabolic process"/>
    <property type="evidence" value="ECO:0007669"/>
    <property type="project" value="UniProtKB-UniPathway"/>
</dbReference>
<dbReference type="FunFam" id="3.20.20.80:FF:000104">
    <property type="entry name" value="Endo-1,4-beta-xylanase A"/>
    <property type="match status" value="1"/>
</dbReference>
<dbReference type="Gene3D" id="2.60.120.260">
    <property type="entry name" value="Galactose-binding domain-like"/>
    <property type="match status" value="1"/>
</dbReference>
<dbReference type="Gene3D" id="3.20.20.80">
    <property type="entry name" value="Glycosidases"/>
    <property type="match status" value="1"/>
</dbReference>
<dbReference type="InterPro" id="IPR044846">
    <property type="entry name" value="GH10"/>
</dbReference>
<dbReference type="InterPro" id="IPR001000">
    <property type="entry name" value="GH10_dom"/>
</dbReference>
<dbReference type="InterPro" id="IPR017853">
    <property type="entry name" value="Glycoside_hydrolase_SF"/>
</dbReference>
<dbReference type="PANTHER" id="PTHR31490:SF41">
    <property type="entry name" value="ENDO-1,4-BETA-XYLANASE 4"/>
    <property type="match status" value="1"/>
</dbReference>
<dbReference type="PANTHER" id="PTHR31490">
    <property type="entry name" value="GLYCOSYL HYDROLASE"/>
    <property type="match status" value="1"/>
</dbReference>
<dbReference type="Pfam" id="PF00331">
    <property type="entry name" value="Glyco_hydro_10"/>
    <property type="match status" value="1"/>
</dbReference>
<dbReference type="SMART" id="SM00633">
    <property type="entry name" value="Glyco_10"/>
    <property type="match status" value="1"/>
</dbReference>
<dbReference type="SUPFAM" id="SSF51445">
    <property type="entry name" value="(Trans)glycosidases"/>
    <property type="match status" value="1"/>
</dbReference>
<dbReference type="PROSITE" id="PS51760">
    <property type="entry name" value="GH10_2"/>
    <property type="match status" value="1"/>
</dbReference>
<keyword id="KW-0119">Carbohydrate metabolism</keyword>
<keyword id="KW-0325">Glycoprotein</keyword>
<keyword id="KW-0326">Glycosidase</keyword>
<keyword id="KW-0378">Hydrolase</keyword>
<keyword id="KW-0624">Polysaccharide degradation</keyword>
<keyword id="KW-1185">Reference proteome</keyword>
<keyword id="KW-0677">Repeat</keyword>
<keyword id="KW-0732">Signal</keyword>
<keyword id="KW-0858">Xylan degradation</keyword>
<comment type="function">
    <text evidence="1">Binds to and hydrolyzes insoluble and soluble xylan substrates.</text>
</comment>
<comment type="catalytic activity">
    <reaction evidence="4">
        <text>Endohydrolysis of (1-&gt;4)-beta-D-xylosidic linkages in xylans.</text>
        <dbReference type="EC" id="3.2.1.8"/>
    </reaction>
</comment>
<comment type="pathway">
    <text evidence="4">Glycan degradation; xylan degradation.</text>
</comment>
<comment type="domain">
    <text evidence="1">The GH10 domain binds to xylan.</text>
</comment>
<comment type="similarity">
    <text evidence="4">Belongs to the glycosyl hydrolase 10 (cellulase F) family.</text>
</comment>
<comment type="sequence caution" evidence="6">
    <conflict type="erroneous gene model prediction">
        <sequence resource="EMBL-CDS" id="AAC69373"/>
    </conflict>
</comment>
<protein>
    <recommendedName>
        <fullName evidence="5">Endo-1,4-beta-xylanase 4</fullName>
        <shortName evidence="5">AtXyn4</shortName>
        <shortName evidence="5">Xylan endohydrolase 4</shortName>
        <shortName evidence="5">Xylanase 4</shortName>
        <ecNumber evidence="4">3.2.1.8</ecNumber>
    </recommendedName>
</protein>
<organism>
    <name type="scientific">Arabidopsis thaliana</name>
    <name type="common">Mouse-ear cress</name>
    <dbReference type="NCBI Taxonomy" id="3702"/>
    <lineage>
        <taxon>Eukaryota</taxon>
        <taxon>Viridiplantae</taxon>
        <taxon>Streptophyta</taxon>
        <taxon>Embryophyta</taxon>
        <taxon>Tracheophyta</taxon>
        <taxon>Spermatophyta</taxon>
        <taxon>Magnoliopsida</taxon>
        <taxon>eudicotyledons</taxon>
        <taxon>Gunneridae</taxon>
        <taxon>Pentapetalae</taxon>
        <taxon>rosids</taxon>
        <taxon>malvids</taxon>
        <taxon>Brassicales</taxon>
        <taxon>Brassicaceae</taxon>
        <taxon>Camelineae</taxon>
        <taxon>Arabidopsis</taxon>
    </lineage>
</organism>
<evidence type="ECO:0000250" key="1">
    <source>
        <dbReference type="UniProtKB" id="A3DH97"/>
    </source>
</evidence>
<evidence type="ECO:0000255" key="2"/>
<evidence type="ECO:0000255" key="3">
    <source>
        <dbReference type="PROSITE-ProRule" id="PRU00498"/>
    </source>
</evidence>
<evidence type="ECO:0000255" key="4">
    <source>
        <dbReference type="PROSITE-ProRule" id="PRU01096"/>
    </source>
</evidence>
<evidence type="ECO:0000303" key="5">
    <source>
    </source>
</evidence>
<evidence type="ECO:0000305" key="6"/>
<evidence type="ECO:0000312" key="7">
    <source>
        <dbReference type="Araport" id="AT2G14690"/>
    </source>
</evidence>
<evidence type="ECO:0000312" key="8">
    <source>
        <dbReference type="EMBL" id="AAC69373.1"/>
    </source>
</evidence>
<accession>Q680B7</accession>
<accession>Q6NQ91</accession>
<accession>Q9ZVK8</accession>
<proteinExistence type="evidence at transcript level"/>
<sequence>MKRFNYGFFHLVLFLISLLLLGSGICMDPFSYDQSLKSECLMEPPQTTANTGGEGVKELKINENGGIRNVVEGVDLREGNIYITSAWVKLRNESQRKVGMTFSEKNGRNVFGGEVMAKRGCWSLLKGGITADFSGPIDIFFESDGLAGLEISVQNVRMQRFHKTQWRLQQDQVIEKIRKNKVRFQMSFKNKSALEGSVISIEQIKPSFLLGCAMNYRILESDSYREWFVSRFRLTSFTNEMKWYATEAVRGQENYKIADSMMQLAEENAILVKGHTVLWDDKYWQPNWVKTITDPEDLKNVTLNRMNSVMKRYKGRLIGWDVMNENVHFNYFENMLGGNASAIVYSLASKLDPDIPLFLNEFNTVEYDKDRVVSPVNVVKKMQEIVSFPGNNNIKGGIGAQGHFAPVQPNLAYMRYALDTLGSLSFPVWLTEVDMFKCPDQVKYMEDILREAYSHPAVKAIILYGGPEVSGFDKLTLADKDFKNTQAGDLIDKLLQEWKQEPVEIPIQHHEHNDEEGGRIIGFSPEISLLHGHYRVTVTNPSMKNLSTRFSVEVTKESGHLQEVQLVIDA</sequence>
<gene>
    <name evidence="5" type="primary">XYN4</name>
    <name evidence="7" type="ordered locus">At2g14690</name>
    <name evidence="8" type="ORF">T6B13.7</name>
</gene>